<evidence type="ECO:0000250" key="1">
    <source>
        <dbReference type="UniProtKB" id="P25052"/>
    </source>
</evidence>
<evidence type="ECO:0000250" key="2">
    <source>
        <dbReference type="UniProtKB" id="Q6GEY1"/>
    </source>
</evidence>
<evidence type="ECO:0000305" key="3"/>
<organism>
    <name type="scientific">Staphylococcus carnosus (strain TM300)</name>
    <dbReference type="NCBI Taxonomy" id="396513"/>
    <lineage>
        <taxon>Bacteria</taxon>
        <taxon>Bacillati</taxon>
        <taxon>Bacillota</taxon>
        <taxon>Bacilli</taxon>
        <taxon>Bacillales</taxon>
        <taxon>Staphylococcaceae</taxon>
        <taxon>Staphylococcus</taxon>
    </lineage>
</organism>
<reference key="1">
    <citation type="submission" date="1998-11" db="EMBL/GenBank/DDBJ databases">
        <title>Identification of an operon involved in thiamin biosynthesis in Staphylococcus carnosus TM300.</title>
        <authorList>
            <person name="Krismer B."/>
            <person name="Goetz F."/>
        </authorList>
    </citation>
    <scope>NUCLEOTIDE SEQUENCE [GENOMIC DNA]</scope>
</reference>
<reference key="2">
    <citation type="journal article" date="2009" name="Appl. Environ. Microbiol.">
        <title>Genome analysis of the meat starter culture bacterium Staphylococcus carnosus TM300.</title>
        <authorList>
            <person name="Rosenstein R."/>
            <person name="Nerz C."/>
            <person name="Biswas L."/>
            <person name="Resch A."/>
            <person name="Raddatz G."/>
            <person name="Schuster S.C."/>
            <person name="Goetz F."/>
        </authorList>
    </citation>
    <scope>NUCLEOTIDE SEQUENCE [LARGE SCALE GENOMIC DNA]</scope>
    <source>
        <strain>TM300</strain>
    </source>
</reference>
<proteinExistence type="inferred from homology"/>
<accession>O54496</accession>
<accession>B9DMF8</accession>
<name>TENA_STACT</name>
<sequence>MNFAETLERDAQPIIDEIYQDHFIQELLKGDIKKEALRQYLRADASYLREFANIYALLIPIMPDLESVRFLVDQIQFIVNGEVEAHEYMADYIGENYNEIVQKKVWPPSGDHYIKHMYYNVYAHENAAYAIAAMAPCPYVYAMIAKRAMKDPNLNKSSILAKWFEFYNTEMDPLIEVLDDLMNQLTANMSETEKNEVRENYLQSTVHELNFFNMAYTSEKWQFGGERV</sequence>
<feature type="chain" id="PRO_0000293614" description="Aminopyrimidine aminohydrolase">
    <location>
        <begin position="1"/>
        <end position="228"/>
    </location>
</feature>
<feature type="active site" description="Nucleophile" evidence="1">
    <location>
        <position position="137"/>
    </location>
</feature>
<feature type="active site" description="Proton donor" evidence="1">
    <location>
        <position position="208"/>
    </location>
</feature>
<feature type="binding site" evidence="1">
    <location>
        <position position="44"/>
    </location>
    <ligand>
        <name>substrate</name>
    </ligand>
</feature>
<feature type="binding site" evidence="1">
    <location>
        <position position="141"/>
    </location>
    <ligand>
        <name>substrate</name>
    </ligand>
</feature>
<feature type="binding site" evidence="1">
    <location>
        <position position="167"/>
    </location>
    <ligand>
        <name>substrate</name>
    </ligand>
</feature>
<feature type="site" description="Increases nucleophilicity of active site Cys" evidence="1">
    <location>
        <position position="47"/>
    </location>
</feature>
<dbReference type="EC" id="3.5.99.2" evidence="2"/>
<dbReference type="EMBL" id="AF109218">
    <property type="protein sequence ID" value="AAF25541.1"/>
    <property type="molecule type" value="Genomic_DNA"/>
</dbReference>
<dbReference type="EMBL" id="AM295250">
    <property type="protein sequence ID" value="CAL28501.1"/>
    <property type="molecule type" value="Genomic_DNA"/>
</dbReference>
<dbReference type="RefSeq" id="WP_015900841.1">
    <property type="nucleotide sequence ID" value="NC_012121.1"/>
</dbReference>
<dbReference type="SMR" id="O54496"/>
<dbReference type="GeneID" id="93794051"/>
<dbReference type="KEGG" id="sca:SCA_1596"/>
<dbReference type="eggNOG" id="COG0819">
    <property type="taxonomic scope" value="Bacteria"/>
</dbReference>
<dbReference type="HOGENOM" id="CLU_077537_3_1_9"/>
<dbReference type="OrthoDB" id="34166at2"/>
<dbReference type="BioCyc" id="SCAR396513:SCA_RS08105-MONOMER"/>
<dbReference type="UniPathway" id="UPA00060"/>
<dbReference type="Proteomes" id="UP000000444">
    <property type="component" value="Chromosome"/>
</dbReference>
<dbReference type="GO" id="GO:0005829">
    <property type="term" value="C:cytosol"/>
    <property type="evidence" value="ECO:0007669"/>
    <property type="project" value="TreeGrafter"/>
</dbReference>
<dbReference type="GO" id="GO:0050334">
    <property type="term" value="F:thiaminase activity"/>
    <property type="evidence" value="ECO:0007669"/>
    <property type="project" value="UniProtKB-EC"/>
</dbReference>
<dbReference type="GO" id="GO:0009228">
    <property type="term" value="P:thiamine biosynthetic process"/>
    <property type="evidence" value="ECO:0007669"/>
    <property type="project" value="UniProtKB-KW"/>
</dbReference>
<dbReference type="GO" id="GO:0009229">
    <property type="term" value="P:thiamine diphosphate biosynthetic process"/>
    <property type="evidence" value="ECO:0007669"/>
    <property type="project" value="UniProtKB-UniPathway"/>
</dbReference>
<dbReference type="CDD" id="cd19360">
    <property type="entry name" value="TenA_C_SaTenA-like"/>
    <property type="match status" value="1"/>
</dbReference>
<dbReference type="Gene3D" id="1.20.910.10">
    <property type="entry name" value="Heme oxygenase-like"/>
    <property type="match status" value="1"/>
</dbReference>
<dbReference type="InterPro" id="IPR016084">
    <property type="entry name" value="Haem_Oase-like_multi-hlx"/>
</dbReference>
<dbReference type="InterPro" id="IPR004305">
    <property type="entry name" value="Thiaminase-2/PQQC"/>
</dbReference>
<dbReference type="InterPro" id="IPR027574">
    <property type="entry name" value="Thiaminase_II"/>
</dbReference>
<dbReference type="InterPro" id="IPR050967">
    <property type="entry name" value="Thiamine_Salvage_TenA"/>
</dbReference>
<dbReference type="NCBIfam" id="TIGR04306">
    <property type="entry name" value="salvage_TenA"/>
    <property type="match status" value="1"/>
</dbReference>
<dbReference type="PANTHER" id="PTHR43198">
    <property type="entry name" value="BIFUNCTIONAL TH2 PROTEIN"/>
    <property type="match status" value="1"/>
</dbReference>
<dbReference type="PANTHER" id="PTHR43198:SF2">
    <property type="entry name" value="SI:CH1073-67J19.1-RELATED"/>
    <property type="match status" value="1"/>
</dbReference>
<dbReference type="Pfam" id="PF03070">
    <property type="entry name" value="TENA_THI-4"/>
    <property type="match status" value="1"/>
</dbReference>
<dbReference type="SUPFAM" id="SSF48613">
    <property type="entry name" value="Heme oxygenase-like"/>
    <property type="match status" value="1"/>
</dbReference>
<protein>
    <recommendedName>
        <fullName evidence="1">Aminopyrimidine aminohydrolase</fullName>
        <ecNumber evidence="2">3.5.99.2</ecNumber>
    </recommendedName>
    <alternativeName>
        <fullName evidence="2">Thiaminase II</fullName>
    </alternativeName>
</protein>
<comment type="function">
    <text evidence="1 2">Catalyzes an amino-pyrimidine hydrolysis reaction at the C5' of the pyrimidine moiety of thiamine compounds, a reaction that is part of a thiamine salvage pathway. Thus, catalyzes the conversion of 4-amino-5-aminomethyl-2-methylpyrimidine to 4-amino-5-hydroxymethyl-2-methylpyrimidine (HMP). Is also able to catalyze the hydrolytic cleavage of thiamine; however, this thiaminase activity may not be physiologically relevant. Therefore, is probably involved in the regeneration of the thiamine pyrimidine from thiamine degraded products present in the environment, rather than in thiamine degradation.</text>
</comment>
<comment type="catalytic activity">
    <reaction evidence="1">
        <text>4-amino-5-aminomethyl-2-methylpyrimidine + H2O = 4-amino-5-hydroxymethyl-2-methylpyrimidine + NH4(+)</text>
        <dbReference type="Rhea" id="RHEA:31799"/>
        <dbReference type="ChEBI" id="CHEBI:15377"/>
        <dbReference type="ChEBI" id="CHEBI:16892"/>
        <dbReference type="ChEBI" id="CHEBI:28938"/>
        <dbReference type="ChEBI" id="CHEBI:63416"/>
        <dbReference type="EC" id="3.5.99.2"/>
    </reaction>
</comment>
<comment type="catalytic activity">
    <reaction evidence="2">
        <text>thiamine + H2O = 5-(2-hydroxyethyl)-4-methylthiazole + 4-amino-5-hydroxymethyl-2-methylpyrimidine + H(+)</text>
        <dbReference type="Rhea" id="RHEA:17509"/>
        <dbReference type="ChEBI" id="CHEBI:15377"/>
        <dbReference type="ChEBI" id="CHEBI:15378"/>
        <dbReference type="ChEBI" id="CHEBI:16892"/>
        <dbReference type="ChEBI" id="CHEBI:17957"/>
        <dbReference type="ChEBI" id="CHEBI:18385"/>
        <dbReference type="EC" id="3.5.99.2"/>
    </reaction>
</comment>
<comment type="pathway">
    <text evidence="1">Cofactor biosynthesis; thiamine diphosphate biosynthesis.</text>
</comment>
<comment type="subunit">
    <text evidence="2">Homotetramer.</text>
</comment>
<comment type="similarity">
    <text evidence="3">Belongs to the TenA family.</text>
</comment>
<keyword id="KW-0378">Hydrolase</keyword>
<keyword id="KW-1185">Reference proteome</keyword>
<keyword id="KW-0784">Thiamine biosynthesis</keyword>
<gene>
    <name type="primary">tenA</name>
    <name type="ordered locus">Sca_1596</name>
</gene>